<keyword id="KW-0963">Cytoplasm</keyword>
<keyword id="KW-0967">Endosome</keyword>
<keyword id="KW-0449">Lipoprotein</keyword>
<keyword id="KW-0472">Membrane</keyword>
<keyword id="KW-0519">Myristate</keyword>
<keyword id="KW-0597">Phosphoprotein</keyword>
<keyword id="KW-0653">Protein transport</keyword>
<keyword id="KW-1185">Reference proteome</keyword>
<keyword id="KW-0813">Transport</keyword>
<keyword id="KW-0926">Vacuole</keyword>
<evidence type="ECO:0000250" key="1"/>
<evidence type="ECO:0000269" key="2">
    <source>
    </source>
</evidence>
<evidence type="ECO:0000269" key="3">
    <source>
    </source>
</evidence>
<evidence type="ECO:0000305" key="4"/>
<proteinExistence type="inferred from homology"/>
<protein>
    <recommendedName>
        <fullName>Vacuolar protein sorting-associated protein 20</fullName>
    </recommendedName>
</protein>
<gene>
    <name type="primary">vps20</name>
    <name type="ORF">SPBC215.14c</name>
</gene>
<accession>O94318</accession>
<name>VPS20_SCHPO</name>
<feature type="initiator methionine" description="Removed" evidence="1">
    <location>
        <position position="1"/>
    </location>
</feature>
<feature type="chain" id="PRO_0000362998" description="Vacuolar protein sorting-associated protein 20">
    <location>
        <begin position="2"/>
        <end position="226"/>
    </location>
</feature>
<feature type="lipid moiety-binding region" description="N-myristoyl glycine" evidence="1">
    <location>
        <position position="2"/>
    </location>
</feature>
<sequence>MGVNSSKINDKDRSILSIKEQRDKLLRYSKRLEKIEQLEIDIARKCLRDSDKRGALRALKAKKLYSGLITQTYGQLGNIEQLLSTIEFTLIQKDVMFGLQEGTNLIRQLQADMPLERVGRICNDRDEAMSYVDEVNDMLQGRMSRDQEDEIQEELDSLIREQEDEKVKDLEKPGFTPSTGVDVLPSVPLKNAIPSLDESFPKAASVSNTSSAVVIDEELRKDPVLG</sequence>
<reference key="1">
    <citation type="journal article" date="2002" name="Nature">
        <title>The genome sequence of Schizosaccharomyces pombe.</title>
        <authorList>
            <person name="Wood V."/>
            <person name="Gwilliam R."/>
            <person name="Rajandream M.A."/>
            <person name="Lyne M.H."/>
            <person name="Lyne R."/>
            <person name="Stewart A."/>
            <person name="Sgouros J.G."/>
            <person name="Peat N."/>
            <person name="Hayles J."/>
            <person name="Baker S.G."/>
            <person name="Basham D."/>
            <person name="Bowman S."/>
            <person name="Brooks K."/>
            <person name="Brown D."/>
            <person name="Brown S."/>
            <person name="Chillingworth T."/>
            <person name="Churcher C.M."/>
            <person name="Collins M."/>
            <person name="Connor R."/>
            <person name="Cronin A."/>
            <person name="Davis P."/>
            <person name="Feltwell T."/>
            <person name="Fraser A."/>
            <person name="Gentles S."/>
            <person name="Goble A."/>
            <person name="Hamlin N."/>
            <person name="Harris D.E."/>
            <person name="Hidalgo J."/>
            <person name="Hodgson G."/>
            <person name="Holroyd S."/>
            <person name="Hornsby T."/>
            <person name="Howarth S."/>
            <person name="Huckle E.J."/>
            <person name="Hunt S."/>
            <person name="Jagels K."/>
            <person name="James K.D."/>
            <person name="Jones L."/>
            <person name="Jones M."/>
            <person name="Leather S."/>
            <person name="McDonald S."/>
            <person name="McLean J."/>
            <person name="Mooney P."/>
            <person name="Moule S."/>
            <person name="Mungall K.L."/>
            <person name="Murphy L.D."/>
            <person name="Niblett D."/>
            <person name="Odell C."/>
            <person name="Oliver K."/>
            <person name="O'Neil S."/>
            <person name="Pearson D."/>
            <person name="Quail M.A."/>
            <person name="Rabbinowitsch E."/>
            <person name="Rutherford K.M."/>
            <person name="Rutter S."/>
            <person name="Saunders D."/>
            <person name="Seeger K."/>
            <person name="Sharp S."/>
            <person name="Skelton J."/>
            <person name="Simmonds M.N."/>
            <person name="Squares R."/>
            <person name="Squares S."/>
            <person name="Stevens K."/>
            <person name="Taylor K."/>
            <person name="Taylor R.G."/>
            <person name="Tivey A."/>
            <person name="Walsh S.V."/>
            <person name="Warren T."/>
            <person name="Whitehead S."/>
            <person name="Woodward J.R."/>
            <person name="Volckaert G."/>
            <person name="Aert R."/>
            <person name="Robben J."/>
            <person name="Grymonprez B."/>
            <person name="Weltjens I."/>
            <person name="Vanstreels E."/>
            <person name="Rieger M."/>
            <person name="Schaefer M."/>
            <person name="Mueller-Auer S."/>
            <person name="Gabel C."/>
            <person name="Fuchs M."/>
            <person name="Duesterhoeft A."/>
            <person name="Fritzc C."/>
            <person name="Holzer E."/>
            <person name="Moestl D."/>
            <person name="Hilbert H."/>
            <person name="Borzym K."/>
            <person name="Langer I."/>
            <person name="Beck A."/>
            <person name="Lehrach H."/>
            <person name="Reinhardt R."/>
            <person name="Pohl T.M."/>
            <person name="Eger P."/>
            <person name="Zimmermann W."/>
            <person name="Wedler H."/>
            <person name="Wambutt R."/>
            <person name="Purnelle B."/>
            <person name="Goffeau A."/>
            <person name="Cadieu E."/>
            <person name="Dreano S."/>
            <person name="Gloux S."/>
            <person name="Lelaure V."/>
            <person name="Mottier S."/>
            <person name="Galibert F."/>
            <person name="Aves S.J."/>
            <person name="Xiang Z."/>
            <person name="Hunt C."/>
            <person name="Moore K."/>
            <person name="Hurst S.M."/>
            <person name="Lucas M."/>
            <person name="Rochet M."/>
            <person name="Gaillardin C."/>
            <person name="Tallada V.A."/>
            <person name="Garzon A."/>
            <person name="Thode G."/>
            <person name="Daga R.R."/>
            <person name="Cruzado L."/>
            <person name="Jimenez J."/>
            <person name="Sanchez M."/>
            <person name="del Rey F."/>
            <person name="Benito J."/>
            <person name="Dominguez A."/>
            <person name="Revuelta J.L."/>
            <person name="Moreno S."/>
            <person name="Armstrong J."/>
            <person name="Forsburg S.L."/>
            <person name="Cerutti L."/>
            <person name="Lowe T."/>
            <person name="McCombie W.R."/>
            <person name="Paulsen I."/>
            <person name="Potashkin J."/>
            <person name="Shpakovski G.V."/>
            <person name="Ussery D."/>
            <person name="Barrell B.G."/>
            <person name="Nurse P."/>
        </authorList>
    </citation>
    <scope>NUCLEOTIDE SEQUENCE [LARGE SCALE GENOMIC DNA]</scope>
    <source>
        <strain>972 / ATCC 24843</strain>
    </source>
</reference>
<reference key="2">
    <citation type="journal article" date="2006" name="Nat. Biotechnol.">
        <title>ORFeome cloning and global analysis of protein localization in the fission yeast Schizosaccharomyces pombe.</title>
        <authorList>
            <person name="Matsuyama A."/>
            <person name="Arai R."/>
            <person name="Yashiroda Y."/>
            <person name="Shirai A."/>
            <person name="Kamata A."/>
            <person name="Sekido S."/>
            <person name="Kobayashi Y."/>
            <person name="Hashimoto A."/>
            <person name="Hamamoto M."/>
            <person name="Hiraoka Y."/>
            <person name="Horinouchi S."/>
            <person name="Yoshida M."/>
        </authorList>
    </citation>
    <scope>SUBCELLULAR LOCATION [LARGE SCALE ANALYSIS]</scope>
</reference>
<reference key="3">
    <citation type="journal article" date="2007" name="Microbiology">
        <title>Essential roles of class E Vps proteins for sorting into multivesicular bodies in Schizosaccharomyces pombe.</title>
        <authorList>
            <person name="Iwaki T."/>
            <person name="Onishi M."/>
            <person name="Ikeuchi M."/>
            <person name="Kita A."/>
            <person name="Sugiura R."/>
            <person name="Giga-Hama Y."/>
            <person name="Fukui Y."/>
            <person name="Takegawa K."/>
        </authorList>
    </citation>
    <scope>FUNCTION</scope>
</reference>
<comment type="function">
    <text evidence="3">Class E VPS protein implicated in concentration and sorting of cargo proteins of the multivesicular body (MVB) for incorporation into intralumenal vesicles. The lumenal sequestrated membrane proteins will be targeted into the vacuole after fusion of the endosome with the vacuole.</text>
</comment>
<comment type="subunit">
    <text evidence="1">Component of the endosomal sorting required for transport complex III (ESCRT-III).</text>
</comment>
<comment type="subcellular location">
    <subcellularLocation>
        <location evidence="1">Endosome membrane</location>
        <topology evidence="1">Peripheral membrane protein</topology>
    </subcellularLocation>
    <subcellularLocation>
        <location evidence="1">Vacuole membrane</location>
        <topology evidence="1">Peripheral membrane protein</topology>
    </subcellularLocation>
    <subcellularLocation>
        <location evidence="2">Cytoplasm</location>
        <location evidence="2">Cell cortex</location>
    </subcellularLocation>
</comment>
<comment type="similarity">
    <text evidence="4">Belongs to the SNF7 family.</text>
</comment>
<organism>
    <name type="scientific">Schizosaccharomyces pombe (strain 972 / ATCC 24843)</name>
    <name type="common">Fission yeast</name>
    <dbReference type="NCBI Taxonomy" id="284812"/>
    <lineage>
        <taxon>Eukaryota</taxon>
        <taxon>Fungi</taxon>
        <taxon>Dikarya</taxon>
        <taxon>Ascomycota</taxon>
        <taxon>Taphrinomycotina</taxon>
        <taxon>Schizosaccharomycetes</taxon>
        <taxon>Schizosaccharomycetales</taxon>
        <taxon>Schizosaccharomycetaceae</taxon>
        <taxon>Schizosaccharomyces</taxon>
    </lineage>
</organism>
<dbReference type="EMBL" id="CU329671">
    <property type="protein sequence ID" value="CAA22128.1"/>
    <property type="molecule type" value="Genomic_DNA"/>
</dbReference>
<dbReference type="PIR" id="T39904">
    <property type="entry name" value="T39904"/>
</dbReference>
<dbReference type="RefSeq" id="NP_596691.1">
    <property type="nucleotide sequence ID" value="NM_001022614.2"/>
</dbReference>
<dbReference type="SMR" id="O94318"/>
<dbReference type="BioGRID" id="277248">
    <property type="interactions" value="50"/>
</dbReference>
<dbReference type="FunCoup" id="O94318">
    <property type="interactions" value="397"/>
</dbReference>
<dbReference type="IntAct" id="O94318">
    <property type="interactions" value="1"/>
</dbReference>
<dbReference type="STRING" id="284812.O94318"/>
<dbReference type="iPTMnet" id="O94318"/>
<dbReference type="PaxDb" id="4896-SPBC215.14c.1"/>
<dbReference type="EnsemblFungi" id="SPBC215.14c.1">
    <property type="protein sequence ID" value="SPBC215.14c.1:pep"/>
    <property type="gene ID" value="SPBC215.14c"/>
</dbReference>
<dbReference type="GeneID" id="2540725"/>
<dbReference type="KEGG" id="spo:2540725"/>
<dbReference type="PomBase" id="SPBC215.14c">
    <property type="gene designation" value="vps20"/>
</dbReference>
<dbReference type="VEuPathDB" id="FungiDB:SPBC215.14c"/>
<dbReference type="eggNOG" id="KOG2910">
    <property type="taxonomic scope" value="Eukaryota"/>
</dbReference>
<dbReference type="HOGENOM" id="CLU_086201_0_1_1"/>
<dbReference type="InParanoid" id="O94318"/>
<dbReference type="OMA" id="RAKQPAM"/>
<dbReference type="PhylomeDB" id="O94318"/>
<dbReference type="Reactome" id="R-SPO-1632852">
    <property type="pathway name" value="Macroautophagy"/>
</dbReference>
<dbReference type="Reactome" id="R-SPO-917729">
    <property type="pathway name" value="Endosomal Sorting Complex Required For Transport (ESCRT)"/>
</dbReference>
<dbReference type="Reactome" id="R-SPO-9668328">
    <property type="pathway name" value="Sealing of the nuclear envelope (NE) by ESCRT-III"/>
</dbReference>
<dbReference type="PRO" id="PR:O94318"/>
<dbReference type="Proteomes" id="UP000002485">
    <property type="component" value="Chromosome II"/>
</dbReference>
<dbReference type="GO" id="GO:0005938">
    <property type="term" value="C:cell cortex"/>
    <property type="evidence" value="ECO:0007005"/>
    <property type="project" value="PomBase"/>
</dbReference>
<dbReference type="GO" id="GO:0000815">
    <property type="term" value="C:ESCRT III complex"/>
    <property type="evidence" value="ECO:0000318"/>
    <property type="project" value="GO_Central"/>
</dbReference>
<dbReference type="GO" id="GO:0005771">
    <property type="term" value="C:multivesicular body"/>
    <property type="evidence" value="ECO:0000318"/>
    <property type="project" value="GO_Central"/>
</dbReference>
<dbReference type="GO" id="GO:0005635">
    <property type="term" value="C:nuclear envelope"/>
    <property type="evidence" value="ECO:0000303"/>
    <property type="project" value="PomBase"/>
</dbReference>
<dbReference type="GO" id="GO:0005774">
    <property type="term" value="C:vacuolar membrane"/>
    <property type="evidence" value="ECO:0007669"/>
    <property type="project" value="UniProtKB-SubCell"/>
</dbReference>
<dbReference type="GO" id="GO:0045324">
    <property type="term" value="P:late endosome to vacuole transport"/>
    <property type="evidence" value="ECO:0000315"/>
    <property type="project" value="PomBase"/>
</dbReference>
<dbReference type="GO" id="GO:0032511">
    <property type="term" value="P:late endosome to vacuole transport via multivesicular body sorting pathway"/>
    <property type="evidence" value="ECO:0000318"/>
    <property type="project" value="GO_Central"/>
</dbReference>
<dbReference type="GO" id="GO:0007084">
    <property type="term" value="P:mitotic nuclear membrane reassembly"/>
    <property type="evidence" value="ECO:0000303"/>
    <property type="project" value="PomBase"/>
</dbReference>
<dbReference type="GO" id="GO:0043328">
    <property type="term" value="P:protein transport to vacuole involved in ubiquitin-dependent protein catabolic process via the multivesicular body sorting pathway"/>
    <property type="evidence" value="ECO:0000315"/>
    <property type="project" value="PomBase"/>
</dbReference>
<dbReference type="GO" id="GO:0006900">
    <property type="term" value="P:vesicle budding from membrane"/>
    <property type="evidence" value="ECO:0000318"/>
    <property type="project" value="GO_Central"/>
</dbReference>
<dbReference type="Gene3D" id="1.10.287.1060">
    <property type="entry name" value="ESAT-6-like"/>
    <property type="match status" value="1"/>
</dbReference>
<dbReference type="InterPro" id="IPR005024">
    <property type="entry name" value="Snf7_fam"/>
</dbReference>
<dbReference type="PANTHER" id="PTHR22761">
    <property type="entry name" value="CHARGED MULTIVESICULAR BODY PROTEIN"/>
    <property type="match status" value="1"/>
</dbReference>
<dbReference type="PANTHER" id="PTHR22761:SF5">
    <property type="entry name" value="CHARGED MULTIVESICULAR BODY PROTEIN 6"/>
    <property type="match status" value="1"/>
</dbReference>
<dbReference type="Pfam" id="PF03357">
    <property type="entry name" value="Snf7"/>
    <property type="match status" value="1"/>
</dbReference>